<keyword id="KW-0963">Cytoplasm</keyword>
<keyword id="KW-0378">Hydrolase</keyword>
<keyword id="KW-0479">Metal-binding</keyword>
<keyword id="KW-0533">Nickel</keyword>
<reference key="1">
    <citation type="journal article" date="2007" name="PLoS Genet.">
        <title>Patterns and implications of gene gain and loss in the evolution of Prochlorococcus.</title>
        <authorList>
            <person name="Kettler G.C."/>
            <person name="Martiny A.C."/>
            <person name="Huang K."/>
            <person name="Zucker J."/>
            <person name="Coleman M.L."/>
            <person name="Rodrigue S."/>
            <person name="Chen F."/>
            <person name="Lapidus A."/>
            <person name="Ferriera S."/>
            <person name="Johnson J."/>
            <person name="Steglich C."/>
            <person name="Church G.M."/>
            <person name="Richardson P."/>
            <person name="Chisholm S.W."/>
        </authorList>
    </citation>
    <scope>NUCLEOTIDE SEQUENCE [LARGE SCALE GENOMIC DNA]</scope>
    <source>
        <strain>AS9601</strain>
    </source>
</reference>
<dbReference type="EC" id="3.5.1.5" evidence="1"/>
<dbReference type="EMBL" id="CP000551">
    <property type="protein sequence ID" value="ABM70179.1"/>
    <property type="molecule type" value="Genomic_DNA"/>
</dbReference>
<dbReference type="RefSeq" id="WP_011818336.1">
    <property type="nucleotide sequence ID" value="NC_008816.1"/>
</dbReference>
<dbReference type="SMR" id="A2BQW8"/>
<dbReference type="STRING" id="146891.A9601_08951"/>
<dbReference type="KEGG" id="pmb:A9601_08951"/>
<dbReference type="eggNOG" id="COG0804">
    <property type="taxonomic scope" value="Bacteria"/>
</dbReference>
<dbReference type="HOGENOM" id="CLU_000980_0_0_3"/>
<dbReference type="OrthoDB" id="9802793at2"/>
<dbReference type="UniPathway" id="UPA00258">
    <property type="reaction ID" value="UER00370"/>
</dbReference>
<dbReference type="Proteomes" id="UP000002590">
    <property type="component" value="Chromosome"/>
</dbReference>
<dbReference type="GO" id="GO:0005737">
    <property type="term" value="C:cytoplasm"/>
    <property type="evidence" value="ECO:0007669"/>
    <property type="project" value="UniProtKB-SubCell"/>
</dbReference>
<dbReference type="GO" id="GO:0016151">
    <property type="term" value="F:nickel cation binding"/>
    <property type="evidence" value="ECO:0007669"/>
    <property type="project" value="UniProtKB-UniRule"/>
</dbReference>
<dbReference type="GO" id="GO:0009039">
    <property type="term" value="F:urease activity"/>
    <property type="evidence" value="ECO:0007669"/>
    <property type="project" value="UniProtKB-UniRule"/>
</dbReference>
<dbReference type="GO" id="GO:0043419">
    <property type="term" value="P:urea catabolic process"/>
    <property type="evidence" value="ECO:0007669"/>
    <property type="project" value="UniProtKB-UniRule"/>
</dbReference>
<dbReference type="CDD" id="cd00375">
    <property type="entry name" value="Urease_alpha"/>
    <property type="match status" value="1"/>
</dbReference>
<dbReference type="Gene3D" id="3.20.20.140">
    <property type="entry name" value="Metal-dependent hydrolases"/>
    <property type="match status" value="1"/>
</dbReference>
<dbReference type="Gene3D" id="2.30.40.10">
    <property type="entry name" value="Urease, subunit C, domain 1"/>
    <property type="match status" value="1"/>
</dbReference>
<dbReference type="HAMAP" id="MF_01953">
    <property type="entry name" value="Urease_alpha"/>
    <property type="match status" value="1"/>
</dbReference>
<dbReference type="InterPro" id="IPR006680">
    <property type="entry name" value="Amidohydro-rel"/>
</dbReference>
<dbReference type="InterPro" id="IPR011059">
    <property type="entry name" value="Metal-dep_hydrolase_composite"/>
</dbReference>
<dbReference type="InterPro" id="IPR032466">
    <property type="entry name" value="Metal_Hydrolase"/>
</dbReference>
<dbReference type="InterPro" id="IPR011612">
    <property type="entry name" value="Urease_alpha_N_dom"/>
</dbReference>
<dbReference type="InterPro" id="IPR050112">
    <property type="entry name" value="Urease_alpha_subunit"/>
</dbReference>
<dbReference type="InterPro" id="IPR017950">
    <property type="entry name" value="Urease_AS"/>
</dbReference>
<dbReference type="InterPro" id="IPR005848">
    <property type="entry name" value="Urease_asu"/>
</dbReference>
<dbReference type="InterPro" id="IPR017951">
    <property type="entry name" value="Urease_asu_c"/>
</dbReference>
<dbReference type="NCBIfam" id="NF009685">
    <property type="entry name" value="PRK13206.1"/>
    <property type="match status" value="1"/>
</dbReference>
<dbReference type="NCBIfam" id="NF009686">
    <property type="entry name" value="PRK13207.1"/>
    <property type="match status" value="1"/>
</dbReference>
<dbReference type="NCBIfam" id="TIGR01792">
    <property type="entry name" value="urease_alph"/>
    <property type="match status" value="1"/>
</dbReference>
<dbReference type="PANTHER" id="PTHR43440">
    <property type="entry name" value="UREASE"/>
    <property type="match status" value="1"/>
</dbReference>
<dbReference type="PANTHER" id="PTHR43440:SF1">
    <property type="entry name" value="UREASE"/>
    <property type="match status" value="1"/>
</dbReference>
<dbReference type="Pfam" id="PF01979">
    <property type="entry name" value="Amidohydro_1"/>
    <property type="match status" value="1"/>
</dbReference>
<dbReference type="Pfam" id="PF00449">
    <property type="entry name" value="Urease_alpha"/>
    <property type="match status" value="1"/>
</dbReference>
<dbReference type="PRINTS" id="PR01752">
    <property type="entry name" value="UREASE"/>
</dbReference>
<dbReference type="SUPFAM" id="SSF51338">
    <property type="entry name" value="Composite domain of metallo-dependent hydrolases"/>
    <property type="match status" value="2"/>
</dbReference>
<dbReference type="SUPFAM" id="SSF51556">
    <property type="entry name" value="Metallo-dependent hydrolases"/>
    <property type="match status" value="1"/>
</dbReference>
<dbReference type="PROSITE" id="PS00145">
    <property type="entry name" value="UREASE_2"/>
    <property type="match status" value="1"/>
</dbReference>
<dbReference type="PROSITE" id="PS51368">
    <property type="entry name" value="UREASE_3"/>
    <property type="match status" value="1"/>
</dbReference>
<protein>
    <recommendedName>
        <fullName evidence="1">Urease subunit alpha</fullName>
        <ecNumber evidence="1">3.5.1.5</ecNumber>
    </recommendedName>
    <alternativeName>
        <fullName evidence="1">Urea amidohydrolase subunit alpha</fullName>
    </alternativeName>
</protein>
<name>URE1_PROMS</name>
<gene>
    <name evidence="1" type="primary">ureC</name>
    <name type="ordered locus">A9601_08951</name>
</gene>
<proteinExistence type="inferred from homology"/>
<feature type="chain" id="PRO_1000070683" description="Urease subunit alpha">
    <location>
        <begin position="1"/>
        <end position="569"/>
    </location>
</feature>
<feature type="domain" description="Urease" evidence="1">
    <location>
        <begin position="131"/>
        <end position="569"/>
    </location>
</feature>
<feature type="active site" description="Proton donor" evidence="1">
    <location>
        <position position="322"/>
    </location>
</feature>
<feature type="binding site" evidence="1">
    <location>
        <position position="136"/>
    </location>
    <ligand>
        <name>Ni(2+)</name>
        <dbReference type="ChEBI" id="CHEBI:49786"/>
        <label>1</label>
    </ligand>
</feature>
<feature type="binding site" evidence="1">
    <location>
        <position position="138"/>
    </location>
    <ligand>
        <name>Ni(2+)</name>
        <dbReference type="ChEBI" id="CHEBI:49786"/>
        <label>1</label>
    </ligand>
</feature>
<feature type="binding site" description="via carbamate group" evidence="1">
    <location>
        <position position="219"/>
    </location>
    <ligand>
        <name>Ni(2+)</name>
        <dbReference type="ChEBI" id="CHEBI:49786"/>
        <label>1</label>
    </ligand>
</feature>
<feature type="binding site" description="via carbamate group" evidence="1">
    <location>
        <position position="219"/>
    </location>
    <ligand>
        <name>Ni(2+)</name>
        <dbReference type="ChEBI" id="CHEBI:49786"/>
        <label>2</label>
    </ligand>
</feature>
<feature type="binding site" evidence="1">
    <location>
        <position position="221"/>
    </location>
    <ligand>
        <name>substrate</name>
    </ligand>
</feature>
<feature type="binding site" evidence="1">
    <location>
        <position position="248"/>
    </location>
    <ligand>
        <name>Ni(2+)</name>
        <dbReference type="ChEBI" id="CHEBI:49786"/>
        <label>2</label>
    </ligand>
</feature>
<feature type="binding site" evidence="1">
    <location>
        <position position="274"/>
    </location>
    <ligand>
        <name>Ni(2+)</name>
        <dbReference type="ChEBI" id="CHEBI:49786"/>
        <label>2</label>
    </ligand>
</feature>
<feature type="binding site" evidence="1">
    <location>
        <position position="362"/>
    </location>
    <ligand>
        <name>Ni(2+)</name>
        <dbReference type="ChEBI" id="CHEBI:49786"/>
        <label>1</label>
    </ligand>
</feature>
<feature type="modified residue" description="N6-carboxylysine" evidence="1">
    <location>
        <position position="219"/>
    </location>
</feature>
<organism>
    <name type="scientific">Prochlorococcus marinus (strain AS9601)</name>
    <dbReference type="NCBI Taxonomy" id="146891"/>
    <lineage>
        <taxon>Bacteria</taxon>
        <taxon>Bacillati</taxon>
        <taxon>Cyanobacteriota</taxon>
        <taxon>Cyanophyceae</taxon>
        <taxon>Synechococcales</taxon>
        <taxon>Prochlorococcaceae</taxon>
        <taxon>Prochlorococcus</taxon>
    </lineage>
</organism>
<sequence>MSYKIDRKTYAQTYGPTTGDRVRLADTELFIEVEKDLTTYGDEVKFGGGKVIRDGMGQSQVRRADGAVDTVITNALIVDWWGIIKADVGIKDGMIFEIGKAGNPDIQDNVDIVIGASTEVIAGEGHILTAGSIDTHIHFICPQQIETALSSGITTMLGGGTGPATGTNATTCTPGSFHISRMLQSAEAFPMNLGFFGKGNSTNEINLIDQVEAGACGLKLHEDWGTTPSTINSCLNVADKFDVQVCIHTDTLNEAGFVEDTINAIAGRTIHTFHTEGAGGGHAPDIIKICGEKNVLPSSTNPTRPYTRNTLEEHLDMLMVCHHLDSKIPEDIAFAESRIRRETIAAEDILHDLGAFSIIASDSQAMGRVGEVITRTFQTAHKMKVQRGPLSQDSDRNDNYRVKRYISKVTINPAIAHGIDKHVGSIEKGKIADLVLWKPSFFAVKPELVVKGGSIVWSQMGDANASIPTPGPVHGRPMFASFGQSLIKSSFTFLSKNSIEQNIPNKLGLQKKCIAVENTRNINKSNLKLNTKLPNISVDPQTYEVFSDGELLTCEPLDEVPMAQRYFLL</sequence>
<comment type="catalytic activity">
    <reaction evidence="1">
        <text>urea + 2 H2O + H(+) = hydrogencarbonate + 2 NH4(+)</text>
        <dbReference type="Rhea" id="RHEA:20557"/>
        <dbReference type="ChEBI" id="CHEBI:15377"/>
        <dbReference type="ChEBI" id="CHEBI:15378"/>
        <dbReference type="ChEBI" id="CHEBI:16199"/>
        <dbReference type="ChEBI" id="CHEBI:17544"/>
        <dbReference type="ChEBI" id="CHEBI:28938"/>
        <dbReference type="EC" id="3.5.1.5"/>
    </reaction>
</comment>
<comment type="cofactor">
    <cofactor evidence="1">
        <name>Ni cation</name>
        <dbReference type="ChEBI" id="CHEBI:25516"/>
    </cofactor>
    <text evidence="1">Binds 2 nickel ions per subunit.</text>
</comment>
<comment type="pathway">
    <text evidence="1">Nitrogen metabolism; urea degradation; CO(2) and NH(3) from urea (urease route): step 1/1.</text>
</comment>
<comment type="subunit">
    <text evidence="1">Heterotrimer of UreA (gamma), UreB (beta) and UreC (alpha) subunits. Three heterotrimers associate to form the active enzyme.</text>
</comment>
<comment type="subcellular location">
    <subcellularLocation>
        <location evidence="1">Cytoplasm</location>
    </subcellularLocation>
</comment>
<comment type="PTM">
    <text evidence="1">Carboxylation allows a single lysine to coordinate two nickel ions.</text>
</comment>
<comment type="similarity">
    <text evidence="1">Belongs to the metallo-dependent hydrolases superfamily. Urease alpha subunit family.</text>
</comment>
<accession>A2BQW8</accession>
<evidence type="ECO:0000255" key="1">
    <source>
        <dbReference type="HAMAP-Rule" id="MF_01953"/>
    </source>
</evidence>